<name>M231_CONTS</name>
<feature type="signal peptide" evidence="3">
    <location>
        <begin position="1"/>
        <end position="20"/>
    </location>
</feature>
<feature type="propeptide" id="PRO_0000404888" evidence="1">
    <location>
        <begin position="21"/>
        <end position="50"/>
    </location>
</feature>
<feature type="peptide" id="PRO_0000404889" description="Conotoxin TsMMSK-B021">
    <location>
        <begin position="53"/>
        <end position="67"/>
    </location>
</feature>
<feature type="modified residue" description="4-hydroxyproline" evidence="1">
    <location>
        <position position="63"/>
    </location>
</feature>
<feature type="disulfide bond" evidence="2">
    <location>
        <begin position="53"/>
        <end position="65"/>
    </location>
</feature>
<feature type="disulfide bond" evidence="2">
    <location>
        <begin position="54"/>
        <end position="61"/>
    </location>
</feature>
<feature type="disulfide bond" evidence="2">
    <location>
        <begin position="58"/>
        <end position="64"/>
    </location>
</feature>
<accession>Q9BPJ0</accession>
<comment type="subcellular location">
    <subcellularLocation>
        <location evidence="1">Secreted</location>
    </subcellularLocation>
</comment>
<comment type="tissue specificity">
    <text>Expressed by the venom duct.</text>
</comment>
<comment type="domain">
    <text>The cysteine framework is III (CC-C-C-CC). Classified in the M-2 branch, since 2 residues stand between the fourth and the fifth cysteine residues.</text>
</comment>
<comment type="similarity">
    <text evidence="4">Belongs to the conotoxin M superfamily.</text>
</comment>
<keyword id="KW-0165">Cleavage on pair of basic residues</keyword>
<keyword id="KW-1015">Disulfide bond</keyword>
<keyword id="KW-0379">Hydroxylation</keyword>
<keyword id="KW-0528">Neurotoxin</keyword>
<keyword id="KW-0964">Secreted</keyword>
<keyword id="KW-0732">Signal</keyword>
<keyword id="KW-0800">Toxin</keyword>
<evidence type="ECO:0000250" key="1"/>
<evidence type="ECO:0000250" key="2">
    <source>
        <dbReference type="UniProtKB" id="P0CI24"/>
    </source>
</evidence>
<evidence type="ECO:0000255" key="3"/>
<evidence type="ECO:0000305" key="4"/>
<sequence>MMSKLGVLLTICLLLFPLTAVQLDGDQPADLPELRAQDFAPERSPWFDPVRRCCSQDCRVCIPCCPN</sequence>
<proteinExistence type="evidence at transcript level"/>
<dbReference type="EMBL" id="AF214934">
    <property type="protein sequence ID" value="AAG60362.1"/>
    <property type="molecule type" value="mRNA"/>
</dbReference>
<dbReference type="ConoServer" id="621">
    <property type="toxin name" value="Ts3.1 precursor"/>
</dbReference>
<dbReference type="GO" id="GO:0005576">
    <property type="term" value="C:extracellular region"/>
    <property type="evidence" value="ECO:0007669"/>
    <property type="project" value="UniProtKB-SubCell"/>
</dbReference>
<dbReference type="GO" id="GO:0008200">
    <property type="term" value="F:ion channel inhibitor activity"/>
    <property type="evidence" value="ECO:0007669"/>
    <property type="project" value="InterPro"/>
</dbReference>
<dbReference type="GO" id="GO:0090729">
    <property type="term" value="F:toxin activity"/>
    <property type="evidence" value="ECO:0007669"/>
    <property type="project" value="UniProtKB-KW"/>
</dbReference>
<dbReference type="InterPro" id="IPR017896">
    <property type="entry name" value="4Fe4S_Fe-S-bd"/>
</dbReference>
<dbReference type="InterPro" id="IPR004214">
    <property type="entry name" value="Conotoxin"/>
</dbReference>
<dbReference type="Pfam" id="PF02950">
    <property type="entry name" value="Conotoxin"/>
    <property type="match status" value="1"/>
</dbReference>
<organism>
    <name type="scientific">Conus tessulatus</name>
    <name type="common">Tessellate cone</name>
    <dbReference type="NCBI Taxonomy" id="101317"/>
    <lineage>
        <taxon>Eukaryota</taxon>
        <taxon>Metazoa</taxon>
        <taxon>Spiralia</taxon>
        <taxon>Lophotrochozoa</taxon>
        <taxon>Mollusca</taxon>
        <taxon>Gastropoda</taxon>
        <taxon>Caenogastropoda</taxon>
        <taxon>Neogastropoda</taxon>
        <taxon>Conoidea</taxon>
        <taxon>Conidae</taxon>
        <taxon>Conus</taxon>
        <taxon>Tesselliconus</taxon>
    </lineage>
</organism>
<protein>
    <recommendedName>
        <fullName>Conotoxin TsMMSK-B021</fullName>
    </recommendedName>
</protein>
<reference key="1">
    <citation type="journal article" date="2001" name="Mol. Biol. Evol.">
        <title>Mechanisms for evolving hypervariability: the case of conopeptides.</title>
        <authorList>
            <person name="Conticello S.G."/>
            <person name="Gilad Y."/>
            <person name="Avidan N."/>
            <person name="Ben-Asher E."/>
            <person name="Levy Z."/>
            <person name="Fainzilber M."/>
        </authorList>
    </citation>
    <scope>NUCLEOTIDE SEQUENCE [MRNA]</scope>
    <source>
        <tissue>Venom duct</tissue>
    </source>
</reference>